<reference key="1">
    <citation type="submission" date="2005-08" db="EMBL/GenBank/DDBJ databases">
        <title>Complete sequence of Chlorobium chlorochromatii CaD3.</title>
        <authorList>
            <consortium name="US DOE Joint Genome Institute"/>
            <person name="Copeland A."/>
            <person name="Lucas S."/>
            <person name="Lapidus A."/>
            <person name="Barry K."/>
            <person name="Detter J.C."/>
            <person name="Glavina T."/>
            <person name="Hammon N."/>
            <person name="Israni S."/>
            <person name="Pitluck S."/>
            <person name="Bryant D."/>
            <person name="Schmutz J."/>
            <person name="Larimer F."/>
            <person name="Land M."/>
            <person name="Kyrpides N."/>
            <person name="Ivanova N."/>
            <person name="Richardson P."/>
        </authorList>
    </citation>
    <scope>NUCLEOTIDE SEQUENCE [LARGE SCALE GENOMIC DNA]</scope>
    <source>
        <strain>CaD3</strain>
    </source>
</reference>
<proteinExistence type="inferred from homology"/>
<organism>
    <name type="scientific">Chlorobium chlorochromatii (strain CaD3)</name>
    <dbReference type="NCBI Taxonomy" id="340177"/>
    <lineage>
        <taxon>Bacteria</taxon>
        <taxon>Pseudomonadati</taxon>
        <taxon>Chlorobiota</taxon>
        <taxon>Chlorobiia</taxon>
        <taxon>Chlorobiales</taxon>
        <taxon>Chlorobiaceae</taxon>
        <taxon>Chlorobium/Pelodictyon group</taxon>
        <taxon>Chlorobium</taxon>
    </lineage>
</organism>
<sequence>MKHTSLPEIRSTTVIGVIRNGQAALGSDGQMTLGNTVVKHSTKKIRRLYQGKLLAGFAGATADALTLLDRFEAKLEAFGGKLERASVELARDWRTDKYLRRLEAMIAIVSNDRALIISGTGDVIEPEDGIVAIGSGSMYALAAARSLMKHTSLSAQEIVQESLAIAADICIYTNNHIVVEEL</sequence>
<comment type="function">
    <text evidence="1">Protease subunit of a proteasome-like degradation complex believed to be a general protein degrading machinery.</text>
</comment>
<comment type="catalytic activity">
    <reaction evidence="1">
        <text>ATP-dependent cleavage of peptide bonds with broad specificity.</text>
        <dbReference type="EC" id="3.4.25.2"/>
    </reaction>
</comment>
<comment type="activity regulation">
    <text evidence="1">Allosterically activated by HslU binding.</text>
</comment>
<comment type="subunit">
    <text evidence="1">A double ring-shaped homohexamer of HslV is capped on each side by a ring-shaped HslU homohexamer. The assembly of the HslU/HslV complex is dependent on binding of ATP.</text>
</comment>
<comment type="subcellular location">
    <subcellularLocation>
        <location evidence="1">Cytoplasm</location>
    </subcellularLocation>
</comment>
<comment type="similarity">
    <text evidence="1">Belongs to the peptidase T1B family. HslV subfamily.</text>
</comment>
<evidence type="ECO:0000255" key="1">
    <source>
        <dbReference type="HAMAP-Rule" id="MF_00248"/>
    </source>
</evidence>
<name>HSLV_CHLCH</name>
<gene>
    <name evidence="1" type="primary">hslV</name>
    <name type="ordered locus">Cag_0782</name>
</gene>
<accession>Q3ASH7</accession>
<keyword id="KW-0021">Allosteric enzyme</keyword>
<keyword id="KW-0963">Cytoplasm</keyword>
<keyword id="KW-0378">Hydrolase</keyword>
<keyword id="KW-0479">Metal-binding</keyword>
<keyword id="KW-0645">Protease</keyword>
<keyword id="KW-0915">Sodium</keyword>
<keyword id="KW-0346">Stress response</keyword>
<keyword id="KW-0888">Threonine protease</keyword>
<protein>
    <recommendedName>
        <fullName evidence="1">ATP-dependent protease subunit HslV</fullName>
        <ecNumber evidence="1">3.4.25.2</ecNumber>
    </recommendedName>
</protein>
<feature type="chain" id="PRO_0000336768" description="ATP-dependent protease subunit HslV">
    <location>
        <begin position="1"/>
        <end position="182"/>
    </location>
</feature>
<feature type="active site" evidence="1">
    <location>
        <position position="12"/>
    </location>
</feature>
<feature type="binding site" evidence="1">
    <location>
        <position position="167"/>
    </location>
    <ligand>
        <name>Na(+)</name>
        <dbReference type="ChEBI" id="CHEBI:29101"/>
    </ligand>
</feature>
<feature type="binding site" evidence="1">
    <location>
        <position position="170"/>
    </location>
    <ligand>
        <name>Na(+)</name>
        <dbReference type="ChEBI" id="CHEBI:29101"/>
    </ligand>
</feature>
<feature type="binding site" evidence="1">
    <location>
        <position position="173"/>
    </location>
    <ligand>
        <name>Na(+)</name>
        <dbReference type="ChEBI" id="CHEBI:29101"/>
    </ligand>
</feature>
<dbReference type="EC" id="3.4.25.2" evidence="1"/>
<dbReference type="EMBL" id="CP000108">
    <property type="protein sequence ID" value="ABB28048.1"/>
    <property type="molecule type" value="Genomic_DNA"/>
</dbReference>
<dbReference type="SMR" id="Q3ASH7"/>
<dbReference type="STRING" id="340177.Cag_0782"/>
<dbReference type="KEGG" id="cch:Cag_0782"/>
<dbReference type="eggNOG" id="COG5405">
    <property type="taxonomic scope" value="Bacteria"/>
</dbReference>
<dbReference type="HOGENOM" id="CLU_093872_1_0_10"/>
<dbReference type="OrthoDB" id="9804884at2"/>
<dbReference type="GO" id="GO:0009376">
    <property type="term" value="C:HslUV protease complex"/>
    <property type="evidence" value="ECO:0007669"/>
    <property type="project" value="UniProtKB-UniRule"/>
</dbReference>
<dbReference type="GO" id="GO:0005839">
    <property type="term" value="C:proteasome core complex"/>
    <property type="evidence" value="ECO:0007669"/>
    <property type="project" value="InterPro"/>
</dbReference>
<dbReference type="GO" id="GO:0046872">
    <property type="term" value="F:metal ion binding"/>
    <property type="evidence" value="ECO:0007669"/>
    <property type="project" value="UniProtKB-KW"/>
</dbReference>
<dbReference type="GO" id="GO:0004298">
    <property type="term" value="F:threonine-type endopeptidase activity"/>
    <property type="evidence" value="ECO:0007669"/>
    <property type="project" value="UniProtKB-KW"/>
</dbReference>
<dbReference type="GO" id="GO:0051603">
    <property type="term" value="P:proteolysis involved in protein catabolic process"/>
    <property type="evidence" value="ECO:0007669"/>
    <property type="project" value="InterPro"/>
</dbReference>
<dbReference type="CDD" id="cd01913">
    <property type="entry name" value="protease_HslV"/>
    <property type="match status" value="1"/>
</dbReference>
<dbReference type="Gene3D" id="3.60.20.10">
    <property type="entry name" value="Glutamine Phosphoribosylpyrophosphate, subunit 1, domain 1"/>
    <property type="match status" value="1"/>
</dbReference>
<dbReference type="HAMAP" id="MF_00248">
    <property type="entry name" value="HslV"/>
    <property type="match status" value="1"/>
</dbReference>
<dbReference type="InterPro" id="IPR022281">
    <property type="entry name" value="ATP-dep_Prtase_HsIV_su"/>
</dbReference>
<dbReference type="InterPro" id="IPR029055">
    <property type="entry name" value="Ntn_hydrolases_N"/>
</dbReference>
<dbReference type="InterPro" id="IPR001353">
    <property type="entry name" value="Proteasome_sua/b"/>
</dbReference>
<dbReference type="InterPro" id="IPR023333">
    <property type="entry name" value="Proteasome_suB-type"/>
</dbReference>
<dbReference type="NCBIfam" id="TIGR03692">
    <property type="entry name" value="ATP_dep_HslV"/>
    <property type="match status" value="1"/>
</dbReference>
<dbReference type="NCBIfam" id="NF003964">
    <property type="entry name" value="PRK05456.1"/>
    <property type="match status" value="1"/>
</dbReference>
<dbReference type="PANTHER" id="PTHR32194:SF0">
    <property type="entry name" value="ATP-DEPENDENT PROTEASE SUBUNIT HSLV"/>
    <property type="match status" value="1"/>
</dbReference>
<dbReference type="PANTHER" id="PTHR32194">
    <property type="entry name" value="METALLOPROTEASE TLDD"/>
    <property type="match status" value="1"/>
</dbReference>
<dbReference type="Pfam" id="PF00227">
    <property type="entry name" value="Proteasome"/>
    <property type="match status" value="1"/>
</dbReference>
<dbReference type="PIRSF" id="PIRSF039093">
    <property type="entry name" value="HslV"/>
    <property type="match status" value="1"/>
</dbReference>
<dbReference type="SUPFAM" id="SSF56235">
    <property type="entry name" value="N-terminal nucleophile aminohydrolases (Ntn hydrolases)"/>
    <property type="match status" value="1"/>
</dbReference>
<dbReference type="PROSITE" id="PS51476">
    <property type="entry name" value="PROTEASOME_BETA_2"/>
    <property type="match status" value="1"/>
</dbReference>